<proteinExistence type="evidence at transcript level"/>
<accession>P48628</accession>
<organism>
    <name type="scientific">Glycine max</name>
    <name type="common">Soybean</name>
    <name type="synonym">Glycine hispida</name>
    <dbReference type="NCBI Taxonomy" id="3847"/>
    <lineage>
        <taxon>Eukaryota</taxon>
        <taxon>Viridiplantae</taxon>
        <taxon>Streptophyta</taxon>
        <taxon>Embryophyta</taxon>
        <taxon>Tracheophyta</taxon>
        <taxon>Spermatophyta</taxon>
        <taxon>Magnoliopsida</taxon>
        <taxon>eudicotyledons</taxon>
        <taxon>Gunneridae</taxon>
        <taxon>Pentapetalae</taxon>
        <taxon>rosids</taxon>
        <taxon>fabids</taxon>
        <taxon>Fabales</taxon>
        <taxon>Fabaceae</taxon>
        <taxon>Papilionoideae</taxon>
        <taxon>50 kb inversion clade</taxon>
        <taxon>NPAAA clade</taxon>
        <taxon>indigoferoid/millettioid clade</taxon>
        <taxon>Phaseoleae</taxon>
        <taxon>Glycine</taxon>
        <taxon>Glycine subgen. Soja</taxon>
    </lineage>
</organism>
<protein>
    <recommendedName>
        <fullName evidence="3">Omega-6 fatty acid desaturase, chloroplastic</fullName>
        <ecNumber evidence="2">1.14.19.23</ecNumber>
    </recommendedName>
</protein>
<comment type="function">
    <text evidence="2">Chloroplast omega-6 fatty acid desaturase introduces the second double bond in the biosynthesis of 16:3 and 18:3 fatty acids, important constituents of plant membranes. It is thought to use ferredoxin as an electron donor and to act on fatty acids esterified to galactolipids, sulfolipids and phosphatidylglycerol.</text>
</comment>
<comment type="catalytic activity">
    <reaction evidence="2">
        <text>a (9Z)-octadecenoyl-containing glycerolipid + 2 reduced [2Fe-2S]-[ferredoxin] + O2 + 2 H(+) = a (9Z,12Z)-octadecadienoyl-containing glycerolipid + 2 oxidized [2Fe-2S]-[ferredoxin] + 2 H2O</text>
        <dbReference type="Rhea" id="RHEA:46376"/>
        <dbReference type="Rhea" id="RHEA-COMP:10000"/>
        <dbReference type="Rhea" id="RHEA-COMP:10001"/>
        <dbReference type="ChEBI" id="CHEBI:15377"/>
        <dbReference type="ChEBI" id="CHEBI:15378"/>
        <dbReference type="ChEBI" id="CHEBI:15379"/>
        <dbReference type="ChEBI" id="CHEBI:33737"/>
        <dbReference type="ChEBI" id="CHEBI:33738"/>
        <dbReference type="ChEBI" id="CHEBI:88240"/>
        <dbReference type="ChEBI" id="CHEBI:88351"/>
        <dbReference type="EC" id="1.14.19.23"/>
    </reaction>
</comment>
<comment type="pathway">
    <text>Lipid metabolism; polyunsaturated fatty acid biosynthesis.</text>
</comment>
<comment type="subcellular location">
    <subcellularLocation>
        <location evidence="4">Plastid</location>
        <location evidence="4">Chloroplast membrane</location>
        <topology evidence="4">Peripheral membrane protein</topology>
    </subcellularLocation>
</comment>
<comment type="domain">
    <text evidence="4">The histidine box domains may contain the active site and/or be involved in metal ion binding.</text>
</comment>
<comment type="similarity">
    <text evidence="4">Belongs to the fatty acid desaturase type 1 family.</text>
</comment>
<name>FAD6C_SOYBN</name>
<sequence>MACTLADSLLLFKGSYQKPVLRRDIAARYSPGIFSLNSNGLIQKRFRRQRNFVTRNKVTVIHAVAIPVQPAPVESAEYRKQLAEDYGFRQVGEPLSDDVTLKDVINPLPKEVFEIDDVKAWKSVLISVTSYALGLFMISKAPWYLLPLAWVWTGTAITGFFVIGHDCAHRSFSSNKLVEDIVGTLAFMPLIYPYEPWRFKHDRHHAKTNMLREDTAWHPVWKDEFESTPLLRKAIIYGYGPFRCWMSIAHWLMWHFDLKKFRPSEVPRVKISLACVFAFIAIGWPLIIYKTGIMGWIKFWLMPWLGYHFWMSTFTMVHHTAPYIPFKYSEEWNRAQAQLNGTVHCDYPKWIEILCHDINVHIPHHISPRIPSYNLRAAHKSLQENWGQYLNEASWNWRLMKTIMTVCQVYDKEKSLCCLRRTCP</sequence>
<dbReference type="EC" id="1.14.19.23" evidence="2"/>
<dbReference type="EMBL" id="L29215">
    <property type="protein sequence ID" value="AAA50158.1"/>
    <property type="molecule type" value="mRNA"/>
</dbReference>
<dbReference type="PIR" id="T07742">
    <property type="entry name" value="T07742"/>
</dbReference>
<dbReference type="RefSeq" id="NP_001238236.1">
    <property type="nucleotide sequence ID" value="NM_001251307.1"/>
</dbReference>
<dbReference type="SMR" id="P48628"/>
<dbReference type="FunCoup" id="P48628">
    <property type="interactions" value="1933"/>
</dbReference>
<dbReference type="STRING" id="3847.P48628"/>
<dbReference type="PaxDb" id="3847-GLYMA02G36460.1"/>
<dbReference type="GeneID" id="547807"/>
<dbReference type="KEGG" id="gmx:547807"/>
<dbReference type="eggNOG" id="ENOG502QQPI">
    <property type="taxonomic scope" value="Eukaryota"/>
</dbReference>
<dbReference type="InParanoid" id="P48628"/>
<dbReference type="OrthoDB" id="10260134at2759"/>
<dbReference type="UniPathway" id="UPA00658"/>
<dbReference type="Proteomes" id="UP000008827">
    <property type="component" value="Unplaced"/>
</dbReference>
<dbReference type="GO" id="GO:0031969">
    <property type="term" value="C:chloroplast membrane"/>
    <property type="evidence" value="ECO:0007669"/>
    <property type="project" value="UniProtKB-SubCell"/>
</dbReference>
<dbReference type="GO" id="GO:0102850">
    <property type="term" value="F:acyl-lipid (n+3)-(Z)-desaturase (ferredoxin) activity"/>
    <property type="evidence" value="ECO:0007669"/>
    <property type="project" value="UniProtKB-EC"/>
</dbReference>
<dbReference type="GO" id="GO:0045485">
    <property type="term" value="F:omega-6 fatty acid desaturase activity"/>
    <property type="evidence" value="ECO:0000318"/>
    <property type="project" value="GO_Central"/>
</dbReference>
<dbReference type="GO" id="GO:0006636">
    <property type="term" value="P:unsaturated fatty acid biosynthetic process"/>
    <property type="evidence" value="ECO:0007669"/>
    <property type="project" value="UniProtKB-UniPathway"/>
</dbReference>
<dbReference type="CDD" id="cd03507">
    <property type="entry name" value="Delta12-FADS-like"/>
    <property type="match status" value="1"/>
</dbReference>
<dbReference type="InterPro" id="IPR005804">
    <property type="entry name" value="FA_desaturase_dom"/>
</dbReference>
<dbReference type="InterPro" id="IPR012171">
    <property type="entry name" value="Fatty_acid_desaturase"/>
</dbReference>
<dbReference type="PANTHER" id="PTHR32100">
    <property type="entry name" value="OMEGA-6 FATTY ACID DESATURASE, CHLOROPLASTIC"/>
    <property type="match status" value="1"/>
</dbReference>
<dbReference type="Pfam" id="PF00487">
    <property type="entry name" value="FA_desaturase"/>
    <property type="match status" value="1"/>
</dbReference>
<keyword id="KW-0007">Acetylation</keyword>
<keyword id="KW-0150">Chloroplast</keyword>
<keyword id="KW-0275">Fatty acid biosynthesis</keyword>
<keyword id="KW-0276">Fatty acid metabolism</keyword>
<keyword id="KW-0444">Lipid biosynthesis</keyword>
<keyword id="KW-0443">Lipid metabolism</keyword>
<keyword id="KW-0472">Membrane</keyword>
<keyword id="KW-0560">Oxidoreductase</keyword>
<keyword id="KW-0934">Plastid</keyword>
<keyword id="KW-1185">Reference proteome</keyword>
<keyword id="KW-0809">Transit peptide</keyword>
<reference key="1">
    <citation type="journal article" date="1994" name="Plant Physiol.">
        <title>Cloning of a higher-plant plastid omega-6 fatty acid desaturase cDNA and its expression in a cyanobacterium.</title>
        <authorList>
            <person name="Hitz W.D."/>
            <person name="Carlson T.J."/>
            <person name="Booth J.R. Jr."/>
            <person name="Kinney A.J."/>
            <person name="Stecca K.L."/>
            <person name="Yadav N.S."/>
        </authorList>
    </citation>
    <scope>NUCLEOTIDE SEQUENCE [MRNA]</scope>
    <source>
        <tissue>Seed</tissue>
    </source>
</reference>
<feature type="transit peptide" description="Chloroplast" evidence="1">
    <location>
        <begin position="1"/>
        <end position="63"/>
    </location>
</feature>
<feature type="chain" id="PRO_0000007125" description="Omega-6 fatty acid desaturase, chloroplastic">
    <location>
        <begin position="64"/>
        <end position="424"/>
    </location>
</feature>
<feature type="short sequence motif" description="Histidine box-1" evidence="4">
    <location>
        <begin position="165"/>
        <end position="169"/>
    </location>
</feature>
<feature type="short sequence motif" description="Histidine box-2" evidence="4">
    <location>
        <begin position="201"/>
        <end position="205"/>
    </location>
</feature>
<feature type="short sequence motif" description="Histidine box-3" evidence="4">
    <location>
        <begin position="361"/>
        <end position="365"/>
    </location>
</feature>
<feature type="modified residue" description="N-acetylvaline" evidence="1">
    <location>
        <position position="64"/>
    </location>
</feature>
<evidence type="ECO:0000250" key="1">
    <source>
        <dbReference type="UniProtKB" id="P46312"/>
    </source>
</evidence>
<evidence type="ECO:0000250" key="2">
    <source>
        <dbReference type="UniProtKB" id="P48627"/>
    </source>
</evidence>
<evidence type="ECO:0000303" key="3">
    <source>
    </source>
</evidence>
<evidence type="ECO:0000305" key="4"/>